<keyword id="KW-0186">Copper</keyword>
<keyword id="KW-1015">Disulfide bond</keyword>
<keyword id="KW-0325">Glycoprotein</keyword>
<keyword id="KW-0470">Melanin biosynthesis</keyword>
<keyword id="KW-0472">Membrane</keyword>
<keyword id="KW-0479">Metal-binding</keyword>
<keyword id="KW-0503">Monooxygenase</keyword>
<keyword id="KW-0560">Oxidoreductase</keyword>
<keyword id="KW-1185">Reference proteome</keyword>
<keyword id="KW-0732">Signal</keyword>
<keyword id="KW-0812">Transmembrane</keyword>
<keyword id="KW-1133">Transmembrane helix</keyword>
<keyword id="KW-0862">Zinc</keyword>
<comment type="function">
    <text evidence="1">Plays a role in melanin biosynthesis. Catalyzes the oxidation of 5,6-dihydroxyindole-2-carboxylic acid (DHICA) into indole-5,6-quinone-2-carboxylic acid. May regulate or influence the type of melanin synthesized. Also to a lower extent, capable of hydroxylating tyrosine and producing melanin.</text>
</comment>
<comment type="catalytic activity">
    <reaction evidence="2">
        <text>2 5,6-dihydroxyindole-2-carboxylate + O2 = 2 indole-5,6-quinone-2-carboxylate + 2 H2O</text>
        <dbReference type="Rhea" id="RHEA:68388"/>
        <dbReference type="ChEBI" id="CHEBI:15377"/>
        <dbReference type="ChEBI" id="CHEBI:15379"/>
        <dbReference type="ChEBI" id="CHEBI:16875"/>
        <dbReference type="ChEBI" id="CHEBI:177869"/>
    </reaction>
    <physiologicalReaction direction="left-to-right" evidence="2">
        <dbReference type="Rhea" id="RHEA:68389"/>
    </physiologicalReaction>
</comment>
<comment type="cofactor">
    <cofactor evidence="2">
        <name>Cu(2+)</name>
        <dbReference type="ChEBI" id="CHEBI:29036"/>
    </cofactor>
    <cofactor evidence="2">
        <name>Zn(2+)</name>
        <dbReference type="ChEBI" id="CHEBI:29105"/>
    </cofactor>
    <text evidence="2">Contains bound zinc ions after heterologous expression in insect cells.</text>
</comment>
<comment type="pathway">
    <text evidence="2">Pigment biosynthesis; melanin biosynthesis.</text>
</comment>
<comment type="subcellular location">
    <subcellularLocation>
        <location evidence="1">Melanosome membrane</location>
        <topology evidence="1">Single-pass type I membrane protein</topology>
    </subcellularLocation>
    <text evidence="1">Located to mature stage III and IV melanosomes and apposed endosomal tubular membranes. Transported to pigmented melanosomes by the BLOC-1 complex. Proper trafficking to melanosome is regulated by SGSM2, ANKRD27, RAB9A, RAB32 and RAB38.</text>
</comment>
<comment type="similarity">
    <text evidence="4">Belongs to the tyrosinase family.</text>
</comment>
<comment type="caution">
    <text evidence="1 2 4">The precise function of this protein in melanin biosynthesis is still under debate. DHICA oxidase activity is controversial. The mouse protein has been shown to have DHICA oxidase activity (By similarity). In contrast, the human protein was shown lack DHICA oxidase activity, or to have DHICA oxidase activity only in the presence of Cu(2+), but not with Zn(2+) (By similarity).</text>
</comment>
<organism>
    <name type="scientific">Carassius auratus</name>
    <name type="common">Goldfish</name>
    <dbReference type="NCBI Taxonomy" id="7957"/>
    <lineage>
        <taxon>Eukaryota</taxon>
        <taxon>Metazoa</taxon>
        <taxon>Chordata</taxon>
        <taxon>Craniata</taxon>
        <taxon>Vertebrata</taxon>
        <taxon>Euteleostomi</taxon>
        <taxon>Actinopterygii</taxon>
        <taxon>Neopterygii</taxon>
        <taxon>Teleostei</taxon>
        <taxon>Ostariophysi</taxon>
        <taxon>Cypriniformes</taxon>
        <taxon>Cyprinidae</taxon>
        <taxon>Cyprininae</taxon>
        <taxon>Carassius</taxon>
    </lineage>
</organism>
<proteinExistence type="evidence at transcript level"/>
<protein>
    <recommendedName>
        <fullName>5,6-dihydroxyindole-2-carboxylic acid oxidase</fullName>
        <shortName>DHICA oxidase</shortName>
        <ecNumber>1.14.18.-</ecNumber>
    </recommendedName>
    <alternativeName>
        <fullName>Tyrosinase-related protein 1</fullName>
        <shortName>TRP-1</shortName>
        <shortName>TRP1</shortName>
    </alternativeName>
</protein>
<reference key="1">
    <citation type="journal article" date="1994" name="Pigment Cell Res.">
        <title>Goldfish tyrosinase related protein I (TRP-1): deduced amino acid sequence from cDNA and comments on structural features.</title>
        <authorList>
            <person name="Peng G."/>
            <person name="Taylor J.D."/>
            <person name="Tchen T.T."/>
        </authorList>
    </citation>
    <scope>NUCLEOTIDE SEQUENCE [MRNA]</scope>
</reference>
<name>TYRP1_CARAU</name>
<dbReference type="EC" id="1.14.18.-"/>
<dbReference type="EMBL" id="S71755">
    <property type="protein sequence ID" value="AAC60750.1"/>
    <property type="molecule type" value="mRNA"/>
</dbReference>
<dbReference type="PIR" id="I51245">
    <property type="entry name" value="I51245"/>
</dbReference>
<dbReference type="SMR" id="P55028"/>
<dbReference type="GlyCosmos" id="P55028">
    <property type="glycosylation" value="4 sites, No reported glycans"/>
</dbReference>
<dbReference type="UniPathway" id="UPA00785"/>
<dbReference type="Proteomes" id="UP000515129">
    <property type="component" value="Unplaced"/>
</dbReference>
<dbReference type="GO" id="GO:0042470">
    <property type="term" value="C:melanosome"/>
    <property type="evidence" value="ECO:0000250"/>
    <property type="project" value="UniProtKB"/>
</dbReference>
<dbReference type="GO" id="GO:0033162">
    <property type="term" value="C:melanosome membrane"/>
    <property type="evidence" value="ECO:0000250"/>
    <property type="project" value="UniProtKB"/>
</dbReference>
<dbReference type="GO" id="GO:0046872">
    <property type="term" value="F:metal ion binding"/>
    <property type="evidence" value="ECO:0007669"/>
    <property type="project" value="UniProtKB-KW"/>
</dbReference>
<dbReference type="GO" id="GO:0004497">
    <property type="term" value="F:monooxygenase activity"/>
    <property type="evidence" value="ECO:0007669"/>
    <property type="project" value="UniProtKB-KW"/>
</dbReference>
<dbReference type="GO" id="GO:0042438">
    <property type="term" value="P:melanin biosynthetic process"/>
    <property type="evidence" value="ECO:0007669"/>
    <property type="project" value="UniProtKB-UniPathway"/>
</dbReference>
<dbReference type="GO" id="GO:0030318">
    <property type="term" value="P:melanocyte differentiation"/>
    <property type="evidence" value="ECO:0007669"/>
    <property type="project" value="TreeGrafter"/>
</dbReference>
<dbReference type="GO" id="GO:0032438">
    <property type="term" value="P:melanosome organization"/>
    <property type="evidence" value="ECO:0007669"/>
    <property type="project" value="TreeGrafter"/>
</dbReference>
<dbReference type="FunFam" id="1.10.1280.10:FF:000001">
    <property type="entry name" value="5,6-dihydroxyindole-2-carboxylic acid oxidase"/>
    <property type="match status" value="1"/>
</dbReference>
<dbReference type="Gene3D" id="1.10.1280.10">
    <property type="entry name" value="Di-copper center containing domain from catechol oxidase"/>
    <property type="match status" value="1"/>
</dbReference>
<dbReference type="InterPro" id="IPR008922">
    <property type="entry name" value="Di-copper_centre_dom_sf"/>
</dbReference>
<dbReference type="InterPro" id="IPR050316">
    <property type="entry name" value="Tyrosinase/Hemocyanin"/>
</dbReference>
<dbReference type="InterPro" id="IPR002227">
    <property type="entry name" value="Tyrosinase_Cu-bd"/>
</dbReference>
<dbReference type="PANTHER" id="PTHR11474:SF3">
    <property type="entry name" value="5,6-DIHYDROXYINDOLE-2-CARBOXYLIC ACID OXIDASE"/>
    <property type="match status" value="1"/>
</dbReference>
<dbReference type="PANTHER" id="PTHR11474">
    <property type="entry name" value="TYROSINASE FAMILY MEMBER"/>
    <property type="match status" value="1"/>
</dbReference>
<dbReference type="Pfam" id="PF00264">
    <property type="entry name" value="Tyrosinase"/>
    <property type="match status" value="1"/>
</dbReference>
<dbReference type="PRINTS" id="PR00092">
    <property type="entry name" value="TYROSINASE"/>
</dbReference>
<dbReference type="SUPFAM" id="SSF48056">
    <property type="entry name" value="Di-copper centre-containing domain"/>
    <property type="match status" value="1"/>
</dbReference>
<dbReference type="PROSITE" id="PS00497">
    <property type="entry name" value="TYROSINASE_1"/>
    <property type="match status" value="1"/>
</dbReference>
<dbReference type="PROSITE" id="PS00498">
    <property type="entry name" value="TYROSINASE_2"/>
    <property type="match status" value="1"/>
</dbReference>
<gene>
    <name type="primary">tyrp1</name>
</gene>
<accession>P55028</accession>
<evidence type="ECO:0000250" key="1">
    <source>
        <dbReference type="UniProtKB" id="P07147"/>
    </source>
</evidence>
<evidence type="ECO:0000250" key="2">
    <source>
        <dbReference type="UniProtKB" id="P17643"/>
    </source>
</evidence>
<evidence type="ECO:0000255" key="3"/>
<evidence type="ECO:0000305" key="4"/>
<feature type="signal peptide" evidence="3">
    <location>
        <begin position="1"/>
        <end position="21"/>
    </location>
</feature>
<feature type="chain" id="PRO_0000035887" description="5,6-dihydroxyindole-2-carboxylic acid oxidase">
    <location>
        <begin position="22"/>
        <end position="522"/>
    </location>
</feature>
<feature type="topological domain" description="Lumenal, melanosome" evidence="3">
    <location>
        <begin position="22"/>
        <end position="470"/>
    </location>
</feature>
<feature type="transmembrane region" description="Helical" evidence="3">
    <location>
        <begin position="471"/>
        <end position="491"/>
    </location>
</feature>
<feature type="topological domain" description="Cytoplasmic" evidence="3">
    <location>
        <begin position="492"/>
        <end position="522"/>
    </location>
</feature>
<feature type="binding site" evidence="2">
    <location>
        <position position="182"/>
    </location>
    <ligand>
        <name>Zn(2+)</name>
        <dbReference type="ChEBI" id="CHEBI:29105"/>
        <label>A</label>
    </ligand>
</feature>
<feature type="binding site" evidence="2">
    <location>
        <position position="205"/>
    </location>
    <ligand>
        <name>Zn(2+)</name>
        <dbReference type="ChEBI" id="CHEBI:29105"/>
        <label>A</label>
    </ligand>
</feature>
<feature type="binding site" evidence="2">
    <location>
        <position position="214"/>
    </location>
    <ligand>
        <name>Zn(2+)</name>
        <dbReference type="ChEBI" id="CHEBI:29105"/>
        <label>A</label>
    </ligand>
</feature>
<feature type="binding site" evidence="2">
    <location>
        <position position="367"/>
    </location>
    <ligand>
        <name>Zn(2+)</name>
        <dbReference type="ChEBI" id="CHEBI:29105"/>
        <label>B</label>
    </ligand>
</feature>
<feature type="binding site" evidence="2">
    <location>
        <position position="371"/>
    </location>
    <ligand>
        <name>Zn(2+)</name>
        <dbReference type="ChEBI" id="CHEBI:29105"/>
        <label>B</label>
    </ligand>
</feature>
<feature type="binding site" evidence="2">
    <location>
        <position position="394"/>
    </location>
    <ligand>
        <name>Zn(2+)</name>
        <dbReference type="ChEBI" id="CHEBI:29105"/>
        <label>B</label>
    </ligand>
</feature>
<feature type="glycosylation site" description="N-linked (GlcNAc...) asparagine" evidence="3">
    <location>
        <position position="164"/>
    </location>
</feature>
<feature type="glycosylation site" description="N-linked (GlcNAc...) asparagine" evidence="3">
    <location>
        <position position="171"/>
    </location>
</feature>
<feature type="glycosylation site" description="N-linked (GlcNAc...) asparagine" evidence="3">
    <location>
        <position position="294"/>
    </location>
</feature>
<feature type="glycosylation site" description="N-linked (GlcNAc...) asparagine" evidence="3">
    <location>
        <position position="375"/>
    </location>
</feature>
<feature type="disulfide bond" evidence="2">
    <location>
        <begin position="27"/>
        <end position="38"/>
    </location>
</feature>
<feature type="disulfide bond" evidence="2">
    <location>
        <begin position="39"/>
        <end position="59"/>
    </location>
</feature>
<feature type="disulfide bond" evidence="2">
    <location>
        <begin position="50"/>
        <end position="89"/>
    </location>
</feature>
<feature type="disulfide bond" evidence="2">
    <location>
        <begin position="91"/>
        <end position="100"/>
    </location>
</feature>
<feature type="disulfide bond" evidence="2">
    <location>
        <begin position="103"/>
        <end position="112"/>
    </location>
</feature>
<feature type="disulfide bond" evidence="2">
    <location>
        <begin position="248"/>
        <end position="251"/>
    </location>
</feature>
<feature type="disulfide bond" evidence="2">
    <location>
        <begin position="280"/>
        <end position="293"/>
    </location>
</feature>
<sequence>MLRTSCGGMLLLVHALGLVRAQFPRACVTPEGLRSAQCCPSPSALESDPCGALAGPGRCVDVRMRAHGPQYPYEGATTRALARASSRACRCNGNFGGFDCGGCAHGFTGDACEQRVPVVRRNVMQLSADEKRFFVNALDQAKRAPHPDTVIATRRYSEILGPDNSTTQFENISIYNLFVWTHYYSVSKTFLGAGQDSFGGVDFSHEGPGFLTWHRYHLLQLERDMQVMLGDPSFALPYWDFAIGGSECDICTDELMGARSSSDSSSISSNSIFSRWRVICESVEEYDTLGTICNSSESSPIRRNPAGNTARPMVQRLPEPQDVEACLELTAFDSPPFYSTSSDSFRNSIEGYSAPQGNYDPVVRSLHNLAHLFLNGTGGQTHLSPNDPIFVLLHTFTDAVFDEWLRRHASDASIYPLENTPIGHNREFNMVPFWPPVTNAEMFVTAAENLGYSYEAEWPARPLTPTQIVTVAVVAALLLVAIIFAASTCVVHLRGNRTEGRQPLLGDQYQRYEDHNKTQSVV</sequence>